<protein>
    <recommendedName>
        <fullName>Enolase 4</fullName>
        <ecNumber evidence="2">4.2.1.11</ecNumber>
    </recommendedName>
    <alternativeName>
        <fullName>2-phospho-D-glycerate hydro-lyase</fullName>
    </alternativeName>
</protein>
<sequence length="572" mass="62419">MSYRVTGDAARKARERYELKQAAAEFYRKRNVPERLEEALNSTFCLGPEDVYGHLANYFAQFSMPPTICQIRGRKVLDGSGEPTVEVEVSCTVKNSDKRICSSVISAVSEHPKASEGLEQERNHSADTAIQWLKDLSPLLKGMSPNEQHNIDQLLSDFYQPKIEEEKARRQMEREASPMAIEPVPSPVTSPALGKKKGSGKGKKAVVMEKPIPPKEAPEPVVPGSPAIGALSLAVAKASSVLGKTPLYLHIATLRNEKLPSEFIMPTPMISVLSCGKSSPGKLNLMKEVLVIPPTGLTVQQSLDMALMLQNQIVKQINSISKTGPAIKNVTPLGCMLIGGDRIEQPLDLICEACQHVGLELGRNLYLAINCAAHELMDYNKAKYEALSGTFKSPDEMVDLYVDLINRQPAILALLDPLRKEDAAQWESLTKALGSKCFLFADAASKPVCKLLESADIHNPPCSGTVIKHTNETTVSQLLGSFKLIEGENRVTILGCPCEESVDDSIADLAVGLGARFVKLGGLLRGERSSKYNRLLAIEDELTQAGTLGFWTKHEFPILSDVENLPGPEEVE</sequence>
<evidence type="ECO:0000250" key="1"/>
<evidence type="ECO:0000250" key="2">
    <source>
        <dbReference type="UniProtKB" id="Q8C042"/>
    </source>
</evidence>
<evidence type="ECO:0000256" key="3">
    <source>
        <dbReference type="SAM" id="MobiDB-lite"/>
    </source>
</evidence>
<evidence type="ECO:0000305" key="4"/>
<proteinExistence type="evidence at transcript level"/>
<reference key="1">
    <citation type="submission" date="2007-12" db="EMBL/GenBank/DDBJ databases">
        <authorList>
            <consortium name="NIH - Xenopus Gene Collection (XGC) project"/>
        </authorList>
    </citation>
    <scope>NUCLEOTIDE SEQUENCE [LARGE SCALE MRNA]</scope>
    <source>
        <tissue>Testis</tissue>
    </source>
</reference>
<name>ENO4_XENLA</name>
<gene>
    <name type="primary">eno4</name>
</gene>
<dbReference type="EC" id="4.2.1.11" evidence="2"/>
<dbReference type="EMBL" id="BC157741">
    <property type="protein sequence ID" value="AAI57742.1"/>
    <property type="status" value="ALT_INIT"/>
    <property type="molecule type" value="mRNA"/>
</dbReference>
<dbReference type="SMR" id="A9UMP7"/>
<dbReference type="AGR" id="Xenbase:XB-GENE-1009721"/>
<dbReference type="Xenbase" id="XB-GENE-1009721">
    <property type="gene designation" value="eno4.L"/>
</dbReference>
<dbReference type="UniPathway" id="UPA00109">
    <property type="reaction ID" value="UER00187"/>
</dbReference>
<dbReference type="Proteomes" id="UP000186698">
    <property type="component" value="Unplaced"/>
</dbReference>
<dbReference type="GO" id="GO:0000015">
    <property type="term" value="C:phosphopyruvate hydratase complex"/>
    <property type="evidence" value="ECO:0000318"/>
    <property type="project" value="GO_Central"/>
</dbReference>
<dbReference type="GO" id="GO:0000287">
    <property type="term" value="F:magnesium ion binding"/>
    <property type="evidence" value="ECO:0007669"/>
    <property type="project" value="InterPro"/>
</dbReference>
<dbReference type="GO" id="GO:0004634">
    <property type="term" value="F:phosphopyruvate hydratase activity"/>
    <property type="evidence" value="ECO:0000318"/>
    <property type="project" value="GO_Central"/>
</dbReference>
<dbReference type="GO" id="GO:0006096">
    <property type="term" value="P:glycolytic process"/>
    <property type="evidence" value="ECO:0000318"/>
    <property type="project" value="GO_Central"/>
</dbReference>
<dbReference type="CDD" id="cd22974">
    <property type="entry name" value="DD_ENO4"/>
    <property type="match status" value="1"/>
</dbReference>
<dbReference type="Gene3D" id="3.20.20.120">
    <property type="entry name" value="Enolase-like C-terminal domain"/>
    <property type="match status" value="1"/>
</dbReference>
<dbReference type="Gene3D" id="3.30.390.10">
    <property type="entry name" value="Enolase-like, N-terminal domain"/>
    <property type="match status" value="1"/>
</dbReference>
<dbReference type="InterPro" id="IPR047500">
    <property type="entry name" value="DD_ENO4"/>
</dbReference>
<dbReference type="InterPro" id="IPR000941">
    <property type="entry name" value="Enolase"/>
</dbReference>
<dbReference type="InterPro" id="IPR036849">
    <property type="entry name" value="Enolase-like_C_sf"/>
</dbReference>
<dbReference type="InterPro" id="IPR029017">
    <property type="entry name" value="Enolase-like_N"/>
</dbReference>
<dbReference type="InterPro" id="IPR020810">
    <property type="entry name" value="Enolase_C"/>
</dbReference>
<dbReference type="InterPro" id="IPR020811">
    <property type="entry name" value="Enolase_N"/>
</dbReference>
<dbReference type="PANTHER" id="PTHR11902">
    <property type="entry name" value="ENOLASE"/>
    <property type="match status" value="1"/>
</dbReference>
<dbReference type="PANTHER" id="PTHR11902:SF30">
    <property type="entry name" value="ENOLASE 4"/>
    <property type="match status" value="1"/>
</dbReference>
<dbReference type="Pfam" id="PF00113">
    <property type="entry name" value="Enolase_C"/>
    <property type="match status" value="1"/>
</dbReference>
<dbReference type="SMART" id="SM01192">
    <property type="entry name" value="Enolase_C"/>
    <property type="match status" value="1"/>
</dbReference>
<dbReference type="SMART" id="SM01193">
    <property type="entry name" value="Enolase_N"/>
    <property type="match status" value="1"/>
</dbReference>
<dbReference type="SUPFAM" id="SSF51604">
    <property type="entry name" value="Enolase C-terminal domain-like"/>
    <property type="match status" value="1"/>
</dbReference>
<dbReference type="SUPFAM" id="SSF54826">
    <property type="entry name" value="Enolase N-terminal domain-like"/>
    <property type="match status" value="1"/>
</dbReference>
<accession>A9UMP7</accession>
<organism>
    <name type="scientific">Xenopus laevis</name>
    <name type="common">African clawed frog</name>
    <dbReference type="NCBI Taxonomy" id="8355"/>
    <lineage>
        <taxon>Eukaryota</taxon>
        <taxon>Metazoa</taxon>
        <taxon>Chordata</taxon>
        <taxon>Craniata</taxon>
        <taxon>Vertebrata</taxon>
        <taxon>Euteleostomi</taxon>
        <taxon>Amphibia</taxon>
        <taxon>Batrachia</taxon>
        <taxon>Anura</taxon>
        <taxon>Pipoidea</taxon>
        <taxon>Pipidae</taxon>
        <taxon>Xenopodinae</taxon>
        <taxon>Xenopus</taxon>
        <taxon>Xenopus</taxon>
    </lineage>
</organism>
<comment type="catalytic activity">
    <reaction evidence="2">
        <text>(2R)-2-phosphoglycerate = phosphoenolpyruvate + H2O</text>
        <dbReference type="Rhea" id="RHEA:10164"/>
        <dbReference type="ChEBI" id="CHEBI:15377"/>
        <dbReference type="ChEBI" id="CHEBI:58289"/>
        <dbReference type="ChEBI" id="CHEBI:58702"/>
        <dbReference type="EC" id="4.2.1.11"/>
    </reaction>
</comment>
<comment type="pathway">
    <text evidence="2">Carbohydrate degradation; glycolysis; pyruvate from D-glyceraldehyde 3-phosphate: step 4/5.</text>
</comment>
<comment type="similarity">
    <text evidence="4">Belongs to the enolase family.</text>
</comment>
<comment type="caution">
    <text evidence="4">Although it belongs to the enolase family, Leu-333 is present instead of the conserved Glu which is expected to be an active site residue.</text>
</comment>
<comment type="sequence caution" evidence="4">
    <conflict type="erroneous initiation">
        <sequence resource="EMBL-CDS" id="AAI57742"/>
    </conflict>
    <text>Extended N-terminus.</text>
</comment>
<feature type="chain" id="PRO_0000348457" description="Enolase 4">
    <location>
        <begin position="1"/>
        <end position="572"/>
    </location>
</feature>
<feature type="region of interest" description="Disordered" evidence="3">
    <location>
        <begin position="181"/>
        <end position="204"/>
    </location>
</feature>
<feature type="compositionally biased region" description="Basic residues" evidence="3">
    <location>
        <begin position="194"/>
        <end position="204"/>
    </location>
</feature>
<feature type="active site" description="Proton acceptor" evidence="1">
    <location>
        <position position="468"/>
    </location>
</feature>
<feature type="binding site" evidence="1">
    <location>
        <position position="288"/>
    </location>
    <ligand>
        <name>substrate</name>
    </ligand>
</feature>
<feature type="binding site" evidence="1">
    <location>
        <position position="519"/>
    </location>
    <ligand>
        <name>substrate</name>
    </ligand>
</feature>
<keyword id="KW-0324">Glycolysis</keyword>
<keyword id="KW-0456">Lyase</keyword>
<keyword id="KW-1185">Reference proteome</keyword>